<accession>A9KWR8</accession>
<reference key="1">
    <citation type="submission" date="2007-11" db="EMBL/GenBank/DDBJ databases">
        <title>Complete sequence of chromosome of Shewanella baltica OS195.</title>
        <authorList>
            <consortium name="US DOE Joint Genome Institute"/>
            <person name="Copeland A."/>
            <person name="Lucas S."/>
            <person name="Lapidus A."/>
            <person name="Barry K."/>
            <person name="Glavina del Rio T."/>
            <person name="Dalin E."/>
            <person name="Tice H."/>
            <person name="Pitluck S."/>
            <person name="Chain P."/>
            <person name="Malfatti S."/>
            <person name="Shin M."/>
            <person name="Vergez L."/>
            <person name="Schmutz J."/>
            <person name="Larimer F."/>
            <person name="Land M."/>
            <person name="Hauser L."/>
            <person name="Kyrpides N."/>
            <person name="Kim E."/>
            <person name="Brettar I."/>
            <person name="Rodrigues J."/>
            <person name="Konstantinidis K."/>
            <person name="Klappenbach J."/>
            <person name="Hofle M."/>
            <person name="Tiedje J."/>
            <person name="Richardson P."/>
        </authorList>
    </citation>
    <scope>NUCLEOTIDE SEQUENCE [LARGE SCALE GENOMIC DNA]</scope>
    <source>
        <strain>OS195</strain>
    </source>
</reference>
<proteinExistence type="inferred from homology"/>
<feature type="signal peptide" evidence="1">
    <location>
        <begin position="1"/>
        <end position="20"/>
    </location>
</feature>
<feature type="chain" id="PRO_5000296731" description="Flagellar P-ring protein">
    <location>
        <begin position="21"/>
        <end position="363"/>
    </location>
</feature>
<name>FLGI_SHEB9</name>
<dbReference type="EMBL" id="CP000891">
    <property type="protein sequence ID" value="ABX50255.1"/>
    <property type="molecule type" value="Genomic_DNA"/>
</dbReference>
<dbReference type="RefSeq" id="WP_006082420.1">
    <property type="nucleotide sequence ID" value="NC_009997.1"/>
</dbReference>
<dbReference type="SMR" id="A9KWR8"/>
<dbReference type="KEGG" id="sbn:Sbal195_3093"/>
<dbReference type="HOGENOM" id="CLU_045235_1_0_6"/>
<dbReference type="Proteomes" id="UP000000770">
    <property type="component" value="Chromosome"/>
</dbReference>
<dbReference type="GO" id="GO:0009428">
    <property type="term" value="C:bacterial-type flagellum basal body, distal rod, P ring"/>
    <property type="evidence" value="ECO:0007669"/>
    <property type="project" value="InterPro"/>
</dbReference>
<dbReference type="GO" id="GO:0030288">
    <property type="term" value="C:outer membrane-bounded periplasmic space"/>
    <property type="evidence" value="ECO:0007669"/>
    <property type="project" value="InterPro"/>
</dbReference>
<dbReference type="GO" id="GO:0005198">
    <property type="term" value="F:structural molecule activity"/>
    <property type="evidence" value="ECO:0007669"/>
    <property type="project" value="InterPro"/>
</dbReference>
<dbReference type="GO" id="GO:0071973">
    <property type="term" value="P:bacterial-type flagellum-dependent cell motility"/>
    <property type="evidence" value="ECO:0007669"/>
    <property type="project" value="InterPro"/>
</dbReference>
<dbReference type="HAMAP" id="MF_00416">
    <property type="entry name" value="FlgI"/>
    <property type="match status" value="1"/>
</dbReference>
<dbReference type="InterPro" id="IPR001782">
    <property type="entry name" value="Flag_FlgI"/>
</dbReference>
<dbReference type="NCBIfam" id="NF003676">
    <property type="entry name" value="PRK05303.1"/>
    <property type="match status" value="1"/>
</dbReference>
<dbReference type="PANTHER" id="PTHR30381">
    <property type="entry name" value="FLAGELLAR P-RING PERIPLASMIC PROTEIN FLGI"/>
    <property type="match status" value="1"/>
</dbReference>
<dbReference type="PANTHER" id="PTHR30381:SF0">
    <property type="entry name" value="FLAGELLAR P-RING PROTEIN"/>
    <property type="match status" value="1"/>
</dbReference>
<dbReference type="Pfam" id="PF02119">
    <property type="entry name" value="FlgI"/>
    <property type="match status" value="1"/>
</dbReference>
<dbReference type="PRINTS" id="PR01010">
    <property type="entry name" value="FLGPRINGFLGI"/>
</dbReference>
<sequence>MKYKLVLAVAVLVFSLPSQAERIKDIANVQGVRSNQLIGYGLVVGLPGTGEKTSYTEQTFMTMLKNFGINLPDNVKPKIKNVAVVAVHADMPAFIKPGQDLDVTVSSLGEAKSLRGGTLLQTFLKGVDGNVYAIAQGSLVVSGFSADGLDGSKVIQNTPTVGRIPNGAIVERSVATPFSTGDYLTFNLRRSDFSTAQRMADAINELLGPDMARPLDATSVQVSAPRDVSQRVSFLATLENLDVIPAEESAKVIVNSRTGTIVVGQNVRLLPAAITHGGMTVTIAEATQVSQPNALANGQTTVTSNSTITATESDRRMFMFNPGTTLDELVRAVNLVGAAPSDVLAILEALKVAGALHGELIII</sequence>
<protein>
    <recommendedName>
        <fullName evidence="1">Flagellar P-ring protein</fullName>
    </recommendedName>
    <alternativeName>
        <fullName evidence="1">Basal body P-ring protein</fullName>
    </alternativeName>
</protein>
<gene>
    <name evidence="1" type="primary">flgI</name>
    <name type="ordered locus">Sbal195_3093</name>
</gene>
<evidence type="ECO:0000255" key="1">
    <source>
        <dbReference type="HAMAP-Rule" id="MF_00416"/>
    </source>
</evidence>
<comment type="function">
    <text evidence="1">Assembles around the rod to form the L-ring and probably protects the motor/basal body from shearing forces during rotation.</text>
</comment>
<comment type="subunit">
    <text evidence="1">The basal body constitutes a major portion of the flagellar organelle and consists of four rings (L,P,S, and M) mounted on a central rod.</text>
</comment>
<comment type="subcellular location">
    <subcellularLocation>
        <location evidence="1">Periplasm</location>
    </subcellularLocation>
    <subcellularLocation>
        <location evidence="1">Bacterial flagellum basal body</location>
    </subcellularLocation>
</comment>
<comment type="similarity">
    <text evidence="1">Belongs to the FlgI family.</text>
</comment>
<keyword id="KW-0975">Bacterial flagellum</keyword>
<keyword id="KW-0574">Periplasm</keyword>
<keyword id="KW-0732">Signal</keyword>
<organism>
    <name type="scientific">Shewanella baltica (strain OS195)</name>
    <dbReference type="NCBI Taxonomy" id="399599"/>
    <lineage>
        <taxon>Bacteria</taxon>
        <taxon>Pseudomonadati</taxon>
        <taxon>Pseudomonadota</taxon>
        <taxon>Gammaproteobacteria</taxon>
        <taxon>Alteromonadales</taxon>
        <taxon>Shewanellaceae</taxon>
        <taxon>Shewanella</taxon>
    </lineage>
</organism>